<reference key="1">
    <citation type="journal article" date="2004" name="PLoS Biol.">
        <title>Genomic insights into methanotrophy: the complete genome sequence of Methylococcus capsulatus (Bath).</title>
        <authorList>
            <person name="Ward N.L."/>
            <person name="Larsen O."/>
            <person name="Sakwa J."/>
            <person name="Bruseth L."/>
            <person name="Khouri H.M."/>
            <person name="Durkin A.S."/>
            <person name="Dimitrov G."/>
            <person name="Jiang L."/>
            <person name="Scanlan D."/>
            <person name="Kang K.H."/>
            <person name="Lewis M.R."/>
            <person name="Nelson K.E."/>
            <person name="Methe B.A."/>
            <person name="Wu M."/>
            <person name="Heidelberg J.F."/>
            <person name="Paulsen I.T."/>
            <person name="Fouts D.E."/>
            <person name="Ravel J."/>
            <person name="Tettelin H."/>
            <person name="Ren Q."/>
            <person name="Read T.D."/>
            <person name="DeBoy R.T."/>
            <person name="Seshadri R."/>
            <person name="Salzberg S.L."/>
            <person name="Jensen H.B."/>
            <person name="Birkeland N.K."/>
            <person name="Nelson W.C."/>
            <person name="Dodson R.J."/>
            <person name="Grindhaug S.H."/>
            <person name="Holt I.E."/>
            <person name="Eidhammer I."/>
            <person name="Jonasen I."/>
            <person name="Vanaken S."/>
            <person name="Utterback T.R."/>
            <person name="Feldblyum T.V."/>
            <person name="Fraser C.M."/>
            <person name="Lillehaug J.R."/>
            <person name="Eisen J.A."/>
        </authorList>
    </citation>
    <scope>NUCLEOTIDE SEQUENCE [LARGE SCALE GENOMIC DNA]</scope>
    <source>
        <strain>ATCC 33009 / NCIMB 11132 / Bath</strain>
    </source>
</reference>
<evidence type="ECO:0000250" key="1"/>
<evidence type="ECO:0000255" key="2">
    <source>
        <dbReference type="HAMAP-Rule" id="MF_00103"/>
    </source>
</evidence>
<accession>Q602J1</accession>
<feature type="initiator methionine" description="Removed" evidence="1">
    <location>
        <position position="1"/>
    </location>
</feature>
<feature type="chain" id="PRO_0000228447" description="Formamidopyrimidine-DNA glycosylase">
    <location>
        <begin position="2"/>
        <end position="271"/>
    </location>
</feature>
<feature type="zinc finger region" description="FPG-type" evidence="2">
    <location>
        <begin position="237"/>
        <end position="271"/>
    </location>
</feature>
<feature type="active site" description="Schiff-base intermediate with DNA" evidence="2">
    <location>
        <position position="2"/>
    </location>
</feature>
<feature type="active site" description="Proton donor" evidence="2">
    <location>
        <position position="3"/>
    </location>
</feature>
<feature type="active site" description="Proton donor; for beta-elimination activity" evidence="2">
    <location>
        <position position="58"/>
    </location>
</feature>
<feature type="active site" description="Proton donor; for delta-elimination activity" evidence="2">
    <location>
        <position position="261"/>
    </location>
</feature>
<feature type="binding site" evidence="2">
    <location>
        <position position="91"/>
    </location>
    <ligand>
        <name>DNA</name>
        <dbReference type="ChEBI" id="CHEBI:16991"/>
    </ligand>
</feature>
<feature type="binding site" evidence="2">
    <location>
        <position position="110"/>
    </location>
    <ligand>
        <name>DNA</name>
        <dbReference type="ChEBI" id="CHEBI:16991"/>
    </ligand>
</feature>
<feature type="binding site" evidence="2">
    <location>
        <position position="152"/>
    </location>
    <ligand>
        <name>DNA</name>
        <dbReference type="ChEBI" id="CHEBI:16991"/>
    </ligand>
</feature>
<sequence>MPELPEVETTRRGIAPHIAGWRIVDVRVREARLRWPVPADLGETLTGRRLTDVRRRGKYLLLDFDEGTLIAHLGMSGSLRICKPGFPPRKHDHVDLVFEGDICLRYHDPRRFGCLLWTAEPPERHPLLAALGPEPLDKAFDGAHLHRLAAGRNTAVKSFIMDSRVVAGVGNIYANEALFRAGIHPARPAGKISLARYRNLGEHIAEVLAASIEQGGTTLRDFVNESGAPGYFKQVLRVYDRAGQPCRVCGEPIRCVRLGQRATYYCPRCQR</sequence>
<proteinExistence type="inferred from homology"/>
<dbReference type="EC" id="3.2.2.23" evidence="2"/>
<dbReference type="EC" id="4.2.99.18" evidence="2"/>
<dbReference type="EMBL" id="AE017282">
    <property type="protein sequence ID" value="AAU90844.1"/>
    <property type="molecule type" value="Genomic_DNA"/>
</dbReference>
<dbReference type="RefSeq" id="WP_010962256.1">
    <property type="nucleotide sequence ID" value="NC_002977.6"/>
</dbReference>
<dbReference type="SMR" id="Q602J1"/>
<dbReference type="STRING" id="243233.MCA3072"/>
<dbReference type="GeneID" id="88225231"/>
<dbReference type="KEGG" id="mca:MCA3072"/>
<dbReference type="eggNOG" id="COG0266">
    <property type="taxonomic scope" value="Bacteria"/>
</dbReference>
<dbReference type="HOGENOM" id="CLU_038423_1_1_6"/>
<dbReference type="Proteomes" id="UP000006821">
    <property type="component" value="Chromosome"/>
</dbReference>
<dbReference type="GO" id="GO:0034039">
    <property type="term" value="F:8-oxo-7,8-dihydroguanine DNA N-glycosylase activity"/>
    <property type="evidence" value="ECO:0007669"/>
    <property type="project" value="TreeGrafter"/>
</dbReference>
<dbReference type="GO" id="GO:0140078">
    <property type="term" value="F:class I DNA-(apurinic or apyrimidinic site) endonuclease activity"/>
    <property type="evidence" value="ECO:0007669"/>
    <property type="project" value="UniProtKB-EC"/>
</dbReference>
<dbReference type="GO" id="GO:0003684">
    <property type="term" value="F:damaged DNA binding"/>
    <property type="evidence" value="ECO:0007669"/>
    <property type="project" value="InterPro"/>
</dbReference>
<dbReference type="GO" id="GO:0008270">
    <property type="term" value="F:zinc ion binding"/>
    <property type="evidence" value="ECO:0007669"/>
    <property type="project" value="UniProtKB-UniRule"/>
</dbReference>
<dbReference type="GO" id="GO:0006284">
    <property type="term" value="P:base-excision repair"/>
    <property type="evidence" value="ECO:0007669"/>
    <property type="project" value="InterPro"/>
</dbReference>
<dbReference type="CDD" id="cd08966">
    <property type="entry name" value="EcFpg-like_N"/>
    <property type="match status" value="1"/>
</dbReference>
<dbReference type="FunFam" id="1.10.8.50:FF:000003">
    <property type="entry name" value="Formamidopyrimidine-DNA glycosylase"/>
    <property type="match status" value="1"/>
</dbReference>
<dbReference type="FunFam" id="3.20.190.10:FF:000001">
    <property type="entry name" value="Formamidopyrimidine-DNA glycosylase"/>
    <property type="match status" value="1"/>
</dbReference>
<dbReference type="Gene3D" id="1.10.8.50">
    <property type="match status" value="1"/>
</dbReference>
<dbReference type="Gene3D" id="3.20.190.10">
    <property type="entry name" value="MutM-like, N-terminal"/>
    <property type="match status" value="1"/>
</dbReference>
<dbReference type="HAMAP" id="MF_00103">
    <property type="entry name" value="Fapy_DNA_glycosyl"/>
    <property type="match status" value="1"/>
</dbReference>
<dbReference type="InterPro" id="IPR015886">
    <property type="entry name" value="DNA_glyclase/AP_lyase_DNA-bd"/>
</dbReference>
<dbReference type="InterPro" id="IPR015887">
    <property type="entry name" value="DNA_glyclase_Znf_dom_DNA_BS"/>
</dbReference>
<dbReference type="InterPro" id="IPR020629">
    <property type="entry name" value="Formamido-pyr_DNA_Glyclase"/>
</dbReference>
<dbReference type="InterPro" id="IPR012319">
    <property type="entry name" value="FPG_cat"/>
</dbReference>
<dbReference type="InterPro" id="IPR035937">
    <property type="entry name" value="MutM-like_N-ter"/>
</dbReference>
<dbReference type="InterPro" id="IPR010979">
    <property type="entry name" value="Ribosomal_uS13-like_H2TH"/>
</dbReference>
<dbReference type="InterPro" id="IPR000214">
    <property type="entry name" value="Znf_DNA_glyclase/AP_lyase"/>
</dbReference>
<dbReference type="InterPro" id="IPR010663">
    <property type="entry name" value="Znf_FPG/IleRS"/>
</dbReference>
<dbReference type="NCBIfam" id="TIGR00577">
    <property type="entry name" value="fpg"/>
    <property type="match status" value="1"/>
</dbReference>
<dbReference type="NCBIfam" id="NF002211">
    <property type="entry name" value="PRK01103.1"/>
    <property type="match status" value="1"/>
</dbReference>
<dbReference type="PANTHER" id="PTHR22993">
    <property type="entry name" value="FORMAMIDOPYRIMIDINE-DNA GLYCOSYLASE"/>
    <property type="match status" value="1"/>
</dbReference>
<dbReference type="PANTHER" id="PTHR22993:SF9">
    <property type="entry name" value="FORMAMIDOPYRIMIDINE-DNA GLYCOSYLASE"/>
    <property type="match status" value="1"/>
</dbReference>
<dbReference type="Pfam" id="PF01149">
    <property type="entry name" value="Fapy_DNA_glyco"/>
    <property type="match status" value="1"/>
</dbReference>
<dbReference type="Pfam" id="PF06831">
    <property type="entry name" value="H2TH"/>
    <property type="match status" value="1"/>
</dbReference>
<dbReference type="Pfam" id="PF06827">
    <property type="entry name" value="zf-FPG_IleRS"/>
    <property type="match status" value="1"/>
</dbReference>
<dbReference type="SMART" id="SM00898">
    <property type="entry name" value="Fapy_DNA_glyco"/>
    <property type="match status" value="1"/>
</dbReference>
<dbReference type="SMART" id="SM01232">
    <property type="entry name" value="H2TH"/>
    <property type="match status" value="1"/>
</dbReference>
<dbReference type="SUPFAM" id="SSF57716">
    <property type="entry name" value="Glucocorticoid receptor-like (DNA-binding domain)"/>
    <property type="match status" value="1"/>
</dbReference>
<dbReference type="SUPFAM" id="SSF81624">
    <property type="entry name" value="N-terminal domain of MutM-like DNA repair proteins"/>
    <property type="match status" value="1"/>
</dbReference>
<dbReference type="SUPFAM" id="SSF46946">
    <property type="entry name" value="S13-like H2TH domain"/>
    <property type="match status" value="1"/>
</dbReference>
<dbReference type="PROSITE" id="PS51068">
    <property type="entry name" value="FPG_CAT"/>
    <property type="match status" value="1"/>
</dbReference>
<dbReference type="PROSITE" id="PS01242">
    <property type="entry name" value="ZF_FPG_1"/>
    <property type="match status" value="1"/>
</dbReference>
<dbReference type="PROSITE" id="PS51066">
    <property type="entry name" value="ZF_FPG_2"/>
    <property type="match status" value="1"/>
</dbReference>
<comment type="function">
    <text evidence="2">Involved in base excision repair of DNA damaged by oxidation or by mutagenic agents. Acts as a DNA glycosylase that recognizes and removes damaged bases. Has a preference for oxidized purines, such as 7,8-dihydro-8-oxoguanine (8-oxoG). Has AP (apurinic/apyrimidinic) lyase activity and introduces nicks in the DNA strand. Cleaves the DNA backbone by beta-delta elimination to generate a single-strand break at the site of the removed base with both 3'- and 5'-phosphates.</text>
</comment>
<comment type="catalytic activity">
    <reaction evidence="2">
        <text>Hydrolysis of DNA containing ring-opened 7-methylguanine residues, releasing 2,6-diamino-4-hydroxy-5-(N-methyl)formamidopyrimidine.</text>
        <dbReference type="EC" id="3.2.2.23"/>
    </reaction>
</comment>
<comment type="catalytic activity">
    <reaction evidence="2">
        <text>2'-deoxyribonucleotide-(2'-deoxyribose 5'-phosphate)-2'-deoxyribonucleotide-DNA = a 3'-end 2'-deoxyribonucleotide-(2,3-dehydro-2,3-deoxyribose 5'-phosphate)-DNA + a 5'-end 5'-phospho-2'-deoxyribonucleoside-DNA + H(+)</text>
        <dbReference type="Rhea" id="RHEA:66592"/>
        <dbReference type="Rhea" id="RHEA-COMP:13180"/>
        <dbReference type="Rhea" id="RHEA-COMP:16897"/>
        <dbReference type="Rhea" id="RHEA-COMP:17067"/>
        <dbReference type="ChEBI" id="CHEBI:15378"/>
        <dbReference type="ChEBI" id="CHEBI:136412"/>
        <dbReference type="ChEBI" id="CHEBI:157695"/>
        <dbReference type="ChEBI" id="CHEBI:167181"/>
        <dbReference type="EC" id="4.2.99.18"/>
    </reaction>
</comment>
<comment type="cofactor">
    <cofactor evidence="2">
        <name>Zn(2+)</name>
        <dbReference type="ChEBI" id="CHEBI:29105"/>
    </cofactor>
    <text evidence="2">Binds 1 zinc ion per subunit.</text>
</comment>
<comment type="subunit">
    <text evidence="2">Monomer.</text>
</comment>
<comment type="similarity">
    <text evidence="2">Belongs to the FPG family.</text>
</comment>
<keyword id="KW-0227">DNA damage</keyword>
<keyword id="KW-0234">DNA repair</keyword>
<keyword id="KW-0238">DNA-binding</keyword>
<keyword id="KW-0326">Glycosidase</keyword>
<keyword id="KW-0378">Hydrolase</keyword>
<keyword id="KW-0456">Lyase</keyword>
<keyword id="KW-0479">Metal-binding</keyword>
<keyword id="KW-0511">Multifunctional enzyme</keyword>
<keyword id="KW-1185">Reference proteome</keyword>
<keyword id="KW-0862">Zinc</keyword>
<keyword id="KW-0863">Zinc-finger</keyword>
<gene>
    <name evidence="2" type="primary">mutM</name>
    <name evidence="2" type="synonym">fpg</name>
    <name type="ordered locus">MCA3072</name>
</gene>
<organism>
    <name type="scientific">Methylococcus capsulatus (strain ATCC 33009 / NCIMB 11132 / Bath)</name>
    <dbReference type="NCBI Taxonomy" id="243233"/>
    <lineage>
        <taxon>Bacteria</taxon>
        <taxon>Pseudomonadati</taxon>
        <taxon>Pseudomonadota</taxon>
        <taxon>Gammaproteobacteria</taxon>
        <taxon>Methylococcales</taxon>
        <taxon>Methylococcaceae</taxon>
        <taxon>Methylococcus</taxon>
    </lineage>
</organism>
<protein>
    <recommendedName>
        <fullName evidence="2">Formamidopyrimidine-DNA glycosylase</fullName>
        <shortName evidence="2">Fapy-DNA glycosylase</shortName>
        <ecNumber evidence="2">3.2.2.23</ecNumber>
    </recommendedName>
    <alternativeName>
        <fullName evidence="2">DNA-(apurinic or apyrimidinic site) lyase MutM</fullName>
        <shortName evidence="2">AP lyase MutM</shortName>
        <ecNumber evidence="2">4.2.99.18</ecNumber>
    </alternativeName>
</protein>
<name>FPG_METCA</name>